<gene>
    <name type="primary">ypfM</name>
    <name type="ordered locus">b4606</name>
    <name type="ordered locus">JW2454.1</name>
</gene>
<proteinExistence type="evidence at protein level"/>
<reference key="1">
    <citation type="journal article" date="1997" name="Science">
        <title>The complete genome sequence of Escherichia coli K-12.</title>
        <authorList>
            <person name="Blattner F.R."/>
            <person name="Plunkett G. III"/>
            <person name="Bloch C.A."/>
            <person name="Perna N.T."/>
            <person name="Burland V."/>
            <person name="Riley M."/>
            <person name="Collado-Vides J."/>
            <person name="Glasner J.D."/>
            <person name="Rode C.K."/>
            <person name="Mayhew G.F."/>
            <person name="Gregor J."/>
            <person name="Davis N.W."/>
            <person name="Kirkpatrick H.A."/>
            <person name="Goeden M.A."/>
            <person name="Rose D.J."/>
            <person name="Mau B."/>
            <person name="Shao Y."/>
        </authorList>
    </citation>
    <scope>NUCLEOTIDE SEQUENCE [LARGE SCALE GENOMIC DNA]</scope>
    <source>
        <strain>K12 / MG1655 / ATCC 47076</strain>
    </source>
</reference>
<reference key="2">
    <citation type="journal article" date="2006" name="Mol. Syst. Biol.">
        <title>Highly accurate genome sequences of Escherichia coli K-12 strains MG1655 and W3110.</title>
        <authorList>
            <person name="Hayashi K."/>
            <person name="Morooka N."/>
            <person name="Yamamoto Y."/>
            <person name="Fujita K."/>
            <person name="Isono K."/>
            <person name="Choi S."/>
            <person name="Ohtsubo E."/>
            <person name="Baba T."/>
            <person name="Wanner B.L."/>
            <person name="Mori H."/>
            <person name="Horiuchi T."/>
        </authorList>
    </citation>
    <scope>NUCLEOTIDE SEQUENCE [LARGE SCALE GENOMIC DNA]</scope>
    <source>
        <strain>K12 / W3110 / ATCC 27325 / DSM 5911</strain>
    </source>
</reference>
<reference key="3">
    <citation type="journal article" date="2008" name="Mol. Microbiol.">
        <title>Small membrane proteins found by comparative genomics and ribosome binding site models.</title>
        <authorList>
            <person name="Hemm M.R."/>
            <person name="Paul B.J."/>
            <person name="Schneider T.D."/>
            <person name="Storz G."/>
            <person name="Rudd K.E."/>
        </authorList>
    </citation>
    <scope>SUBCELLULAR LOCATION</scope>
    <scope>INDUCTION</scope>
    <source>
        <strain>K12 / MG1655 / ATCC 47076</strain>
    </source>
</reference>
<reference key="4">
    <citation type="journal article" date="2010" name="J. Bacteriol.">
        <title>Small stress response proteins in Escherichia coli: proteins missed by classical proteomic studies.</title>
        <authorList>
            <person name="Hemm M.R."/>
            <person name="Paul B.J."/>
            <person name="Miranda-Rios J."/>
            <person name="Zhang A."/>
            <person name="Soltanzad N."/>
            <person name="Storz G."/>
        </authorList>
    </citation>
    <scope>INDUCTION</scope>
    <source>
        <strain>K12 / MG1655 / ATCC 47076</strain>
    </source>
</reference>
<dbReference type="EMBL" id="U00096">
    <property type="protein sequence ID" value="ABP93450.1"/>
    <property type="molecule type" value="Genomic_DNA"/>
</dbReference>
<dbReference type="EMBL" id="AP009048">
    <property type="status" value="NOT_ANNOTATED_CDS"/>
    <property type="molecule type" value="Genomic_DNA"/>
</dbReference>
<dbReference type="RefSeq" id="WP_001386977.1">
    <property type="nucleotide sequence ID" value="NZ_STEB01000051.1"/>
</dbReference>
<dbReference type="RefSeq" id="YP_001165325.1">
    <property type="nucleotide sequence ID" value="NC_000913.3"/>
</dbReference>
<dbReference type="STRING" id="511145.b4606"/>
<dbReference type="EnsemblBacteria" id="ABP93450">
    <property type="protein sequence ID" value="ABP93450"/>
    <property type="gene ID" value="b4606"/>
</dbReference>
<dbReference type="GeneID" id="5061513"/>
<dbReference type="GeneID" id="98389645"/>
<dbReference type="KEGG" id="eco:b4606"/>
<dbReference type="InParanoid" id="A5A621"/>
<dbReference type="BioCyc" id="EcoCyc:MONOMER0-762"/>
<dbReference type="PRO" id="PR:A5A621"/>
<dbReference type="Proteomes" id="UP000000625">
    <property type="component" value="Chromosome"/>
</dbReference>
<dbReference type="GO" id="GO:0005737">
    <property type="term" value="C:cytoplasm"/>
    <property type="evidence" value="ECO:0007669"/>
    <property type="project" value="UniProtKB-SubCell"/>
</dbReference>
<dbReference type="InterPro" id="IPR049852">
    <property type="entry name" value="YpfM-like"/>
</dbReference>
<dbReference type="NCBIfam" id="NF033843">
    <property type="entry name" value="small_YpfM"/>
    <property type="match status" value="1"/>
</dbReference>
<evidence type="ECO:0000269" key="1">
    <source>
    </source>
</evidence>
<evidence type="ECO:0000269" key="2">
    <source>
    </source>
</evidence>
<organism>
    <name type="scientific">Escherichia coli (strain K12)</name>
    <dbReference type="NCBI Taxonomy" id="83333"/>
    <lineage>
        <taxon>Bacteria</taxon>
        <taxon>Pseudomonadati</taxon>
        <taxon>Pseudomonadota</taxon>
        <taxon>Gammaproteobacteria</taxon>
        <taxon>Enterobacterales</taxon>
        <taxon>Enterobacteriaceae</taxon>
        <taxon>Escherichia</taxon>
    </lineage>
</organism>
<accession>A5A621</accession>
<feature type="chain" id="PRO_0000311857" description="Uncharacterized protein YpfM">
    <location>
        <begin position="1"/>
        <end position="19"/>
    </location>
</feature>
<keyword id="KW-0963">Cytoplasm</keyword>
<keyword id="KW-1185">Reference proteome</keyword>
<keyword id="KW-0346">Stress response</keyword>
<sequence length="19" mass="2408">MIERELGNWKDFIEVMLRK</sequence>
<name>YPFM_ECOLI</name>
<comment type="subcellular location">
    <subcellularLocation>
        <location evidence="1">Cytoplasm</location>
    </subcellularLocation>
</comment>
<comment type="induction">
    <text evidence="1 2">Constitutively expressed (PubMed:19121005), increases in stationary phase and at 45 degrees Celsius (PubMed:19121005) (at protein level).</text>
</comment>
<protein>
    <recommendedName>
        <fullName>Uncharacterized protein YpfM</fullName>
    </recommendedName>
</protein>